<keyword id="KW-0963">Cytoplasm</keyword>
<keyword id="KW-0378">Hydrolase</keyword>
<keyword id="KW-0520">NAD</keyword>
<keyword id="KW-0554">One-carbon metabolism</keyword>
<feature type="chain" id="PRO_0000416093" description="Adenosylhomocysteinase">
    <location>
        <begin position="1"/>
        <end position="432"/>
    </location>
</feature>
<feature type="region of interest" description="Disordered" evidence="2">
    <location>
        <begin position="1"/>
        <end position="24"/>
    </location>
</feature>
<feature type="binding site" evidence="1">
    <location>
        <position position="137"/>
    </location>
    <ligand>
        <name>substrate</name>
    </ligand>
</feature>
<feature type="binding site" evidence="1">
    <location>
        <position position="162"/>
    </location>
    <ligand>
        <name>substrate</name>
    </ligand>
</feature>
<feature type="binding site" evidence="1">
    <location>
        <begin position="163"/>
        <end position="165"/>
    </location>
    <ligand>
        <name>NAD(+)</name>
        <dbReference type="ChEBI" id="CHEBI:57540"/>
    </ligand>
</feature>
<feature type="binding site" evidence="1">
    <location>
        <position position="192"/>
    </location>
    <ligand>
        <name>substrate</name>
    </ligand>
</feature>
<feature type="binding site" evidence="1">
    <location>
        <position position="196"/>
    </location>
    <ligand>
        <name>substrate</name>
    </ligand>
</feature>
<feature type="binding site" evidence="1">
    <location>
        <position position="197"/>
    </location>
    <ligand>
        <name>NAD(+)</name>
        <dbReference type="ChEBI" id="CHEBI:57540"/>
    </ligand>
</feature>
<feature type="binding site" evidence="1">
    <location>
        <begin position="226"/>
        <end position="231"/>
    </location>
    <ligand>
        <name>NAD(+)</name>
        <dbReference type="ChEBI" id="CHEBI:57540"/>
    </ligand>
</feature>
<feature type="binding site" evidence="1">
    <location>
        <position position="249"/>
    </location>
    <ligand>
        <name>NAD(+)</name>
        <dbReference type="ChEBI" id="CHEBI:57540"/>
    </ligand>
</feature>
<feature type="binding site" evidence="1">
    <location>
        <position position="284"/>
    </location>
    <ligand>
        <name>NAD(+)</name>
        <dbReference type="ChEBI" id="CHEBI:57540"/>
    </ligand>
</feature>
<feature type="binding site" evidence="1">
    <location>
        <begin position="305"/>
        <end position="307"/>
    </location>
    <ligand>
        <name>NAD(+)</name>
        <dbReference type="ChEBI" id="CHEBI:57540"/>
    </ligand>
</feature>
<feature type="binding site" evidence="1">
    <location>
        <position position="352"/>
    </location>
    <ligand>
        <name>NAD(+)</name>
        <dbReference type="ChEBI" id="CHEBI:57540"/>
    </ligand>
</feature>
<dbReference type="EC" id="3.13.2.1" evidence="1"/>
<dbReference type="EMBL" id="FR746099">
    <property type="protein sequence ID" value="CCC41673.1"/>
    <property type="molecule type" value="Genomic_DNA"/>
</dbReference>
<dbReference type="RefSeq" id="WP_014556988.1">
    <property type="nucleotide sequence ID" value="NC_017459.1"/>
</dbReference>
<dbReference type="SMR" id="G0LFB0"/>
<dbReference type="GeneID" id="12448831"/>
<dbReference type="KEGG" id="hwc:Hqrw_3941"/>
<dbReference type="HOGENOM" id="CLU_025194_2_1_2"/>
<dbReference type="OrthoDB" id="8479at2157"/>
<dbReference type="UniPathway" id="UPA00314">
    <property type="reaction ID" value="UER00076"/>
</dbReference>
<dbReference type="Proteomes" id="UP000007954">
    <property type="component" value="Chromosome"/>
</dbReference>
<dbReference type="GO" id="GO:0005829">
    <property type="term" value="C:cytosol"/>
    <property type="evidence" value="ECO:0007669"/>
    <property type="project" value="TreeGrafter"/>
</dbReference>
<dbReference type="GO" id="GO:0004013">
    <property type="term" value="F:adenosylhomocysteinase activity"/>
    <property type="evidence" value="ECO:0007669"/>
    <property type="project" value="UniProtKB-UniRule"/>
</dbReference>
<dbReference type="GO" id="GO:0071269">
    <property type="term" value="P:L-homocysteine biosynthetic process"/>
    <property type="evidence" value="ECO:0007669"/>
    <property type="project" value="UniProtKB-UniRule"/>
</dbReference>
<dbReference type="GO" id="GO:0006730">
    <property type="term" value="P:one-carbon metabolic process"/>
    <property type="evidence" value="ECO:0007669"/>
    <property type="project" value="UniProtKB-KW"/>
</dbReference>
<dbReference type="GO" id="GO:0033353">
    <property type="term" value="P:S-adenosylmethionine cycle"/>
    <property type="evidence" value="ECO:0007669"/>
    <property type="project" value="TreeGrafter"/>
</dbReference>
<dbReference type="CDD" id="cd00401">
    <property type="entry name" value="SAHH"/>
    <property type="match status" value="1"/>
</dbReference>
<dbReference type="Gene3D" id="3.40.50.1480">
    <property type="entry name" value="Adenosylhomocysteinase-like"/>
    <property type="match status" value="1"/>
</dbReference>
<dbReference type="Gene3D" id="3.40.50.720">
    <property type="entry name" value="NAD(P)-binding Rossmann-like Domain"/>
    <property type="match status" value="1"/>
</dbReference>
<dbReference type="HAMAP" id="MF_00563">
    <property type="entry name" value="AdoHcyase"/>
    <property type="match status" value="1"/>
</dbReference>
<dbReference type="InterPro" id="IPR042172">
    <property type="entry name" value="Adenosylhomocyst_ase-like_sf"/>
</dbReference>
<dbReference type="InterPro" id="IPR000043">
    <property type="entry name" value="Adenosylhomocysteinase-like"/>
</dbReference>
<dbReference type="InterPro" id="IPR015878">
    <property type="entry name" value="Ado_hCys_hydrolase_NAD-bd"/>
</dbReference>
<dbReference type="InterPro" id="IPR036291">
    <property type="entry name" value="NAD(P)-bd_dom_sf"/>
</dbReference>
<dbReference type="InterPro" id="IPR020082">
    <property type="entry name" value="S-Ado-L-homoCys_hydrolase_CS"/>
</dbReference>
<dbReference type="NCBIfam" id="TIGR00936">
    <property type="entry name" value="ahcY"/>
    <property type="match status" value="1"/>
</dbReference>
<dbReference type="NCBIfam" id="NF004005">
    <property type="entry name" value="PRK05476.2-3"/>
    <property type="match status" value="1"/>
</dbReference>
<dbReference type="PANTHER" id="PTHR23420">
    <property type="entry name" value="ADENOSYLHOMOCYSTEINASE"/>
    <property type="match status" value="1"/>
</dbReference>
<dbReference type="PANTHER" id="PTHR23420:SF0">
    <property type="entry name" value="ADENOSYLHOMOCYSTEINASE"/>
    <property type="match status" value="1"/>
</dbReference>
<dbReference type="Pfam" id="PF05221">
    <property type="entry name" value="AdoHcyase"/>
    <property type="match status" value="2"/>
</dbReference>
<dbReference type="Pfam" id="PF00670">
    <property type="entry name" value="AdoHcyase_NAD"/>
    <property type="match status" value="1"/>
</dbReference>
<dbReference type="PIRSF" id="PIRSF001109">
    <property type="entry name" value="Ad_hcy_hydrolase"/>
    <property type="match status" value="1"/>
</dbReference>
<dbReference type="SMART" id="SM00996">
    <property type="entry name" value="AdoHcyase"/>
    <property type="match status" value="1"/>
</dbReference>
<dbReference type="SMART" id="SM00997">
    <property type="entry name" value="AdoHcyase_NAD"/>
    <property type="match status" value="1"/>
</dbReference>
<dbReference type="SUPFAM" id="SSF52283">
    <property type="entry name" value="Formate/glycerate dehydrogenase catalytic domain-like"/>
    <property type="match status" value="1"/>
</dbReference>
<dbReference type="SUPFAM" id="SSF51735">
    <property type="entry name" value="NAD(P)-binding Rossmann-fold domains"/>
    <property type="match status" value="1"/>
</dbReference>
<dbReference type="PROSITE" id="PS00738">
    <property type="entry name" value="ADOHCYASE_1"/>
    <property type="match status" value="1"/>
</dbReference>
<dbReference type="PROSITE" id="PS00739">
    <property type="entry name" value="ADOHCYASE_2"/>
    <property type="match status" value="1"/>
</dbReference>
<proteinExistence type="inferred from homology"/>
<organism>
    <name type="scientific">Haloquadratum walsbyi (strain DSM 16854 / JCM 12705 / C23)</name>
    <dbReference type="NCBI Taxonomy" id="768065"/>
    <lineage>
        <taxon>Archaea</taxon>
        <taxon>Methanobacteriati</taxon>
        <taxon>Methanobacteriota</taxon>
        <taxon>Stenosarchaea group</taxon>
        <taxon>Halobacteria</taxon>
        <taxon>Halobacteriales</taxon>
        <taxon>Haloferacaceae</taxon>
        <taxon>Haloquadratum</taxon>
    </lineage>
</organism>
<reference key="1">
    <citation type="journal article" date="2011" name="PLoS ONE">
        <title>Haloquadratum walsbyi: limited diversity in a global pond.</title>
        <authorList>
            <person name="Dyall-Smith M."/>
            <person name="Pfeiffer F."/>
            <person name="Klee K."/>
            <person name="Palm P."/>
            <person name="Gross K."/>
            <person name="Schuster S.C."/>
            <person name="Rampp M."/>
            <person name="Oesterhelt D."/>
        </authorList>
    </citation>
    <scope>NUCLEOTIDE SEQUENCE [LARGE SCALE GENOMIC DNA]</scope>
    <source>
        <strain>DSM 16854 / JCM 12705 / C23</strain>
    </source>
</reference>
<comment type="function">
    <text evidence="1">May play a key role in the regulation of the intracellular concentration of adenosylhomocysteine.</text>
</comment>
<comment type="catalytic activity">
    <reaction evidence="1">
        <text>S-adenosyl-L-homocysteine + H2O = L-homocysteine + adenosine</text>
        <dbReference type="Rhea" id="RHEA:21708"/>
        <dbReference type="ChEBI" id="CHEBI:15377"/>
        <dbReference type="ChEBI" id="CHEBI:16335"/>
        <dbReference type="ChEBI" id="CHEBI:57856"/>
        <dbReference type="ChEBI" id="CHEBI:58199"/>
        <dbReference type="EC" id="3.13.2.1"/>
    </reaction>
</comment>
<comment type="cofactor">
    <cofactor evidence="1">
        <name>NAD(+)</name>
        <dbReference type="ChEBI" id="CHEBI:57540"/>
    </cofactor>
    <text evidence="1">Binds 1 NAD(+) per subunit.</text>
</comment>
<comment type="pathway">
    <text evidence="1">Amino-acid biosynthesis; L-homocysteine biosynthesis; L-homocysteine from S-adenosyl-L-homocysteine: step 1/1.</text>
</comment>
<comment type="subcellular location">
    <subcellularLocation>
        <location evidence="1">Cytoplasm</location>
    </subcellularLocation>
</comment>
<comment type="similarity">
    <text evidence="1 3">Belongs to the adenosylhomocysteinase family.</text>
</comment>
<gene>
    <name evidence="1" type="primary">ahcY</name>
    <name type="ordered locus">Hqrw_3941</name>
</gene>
<protein>
    <recommendedName>
        <fullName evidence="1">Adenosylhomocysteinase</fullName>
        <ecNumber evidence="1">3.13.2.1</ecNumber>
    </recommendedName>
    <alternativeName>
        <fullName evidence="1">S-adenosyl-L-homocysteine hydrolase</fullName>
        <shortName evidence="1">AdoHcyase</shortName>
    </alternativeName>
</protein>
<sequence length="432" mass="46879">MSAYSPLSAQLDADTDVDVESTRTEGRRKMEWTLQHMPILQELRARFAETKPLAGETIGMAMHVEAKTANLVELLALGGAEVAITGCNPLSTHDDVSAALDSNENVTSYAKRGVDEEAYYDAIEAVVAHEPTITIDDGMDMVYAIHEDHPDLLDTIIGGAEETTTGVHRLRAMDEDDELQYPVFAVNDTPMKRLFDNVHGTGESALATIAMTTNLSYAGKNVVVAGYGYCGKGVAQKAAGQNANVIVTEVEPRRALEAHMEGYEVMPMNEAATRGDVFVTTTGNRDVITQEDFEVMSDGAILANAGHFDVEINLEELSELAIDTYEARDGVQAYELADGRRLNVLAEGRLVNLAAPIALGHPAEVMDQSFGIQAVCVRELIENKSSYDAGVHNVPDELDREVAEIKLEAEGVDIDSLTQTQSEYLDSWSHGT</sequence>
<accession>G0LFB0</accession>
<name>SAHH_HALWC</name>
<evidence type="ECO:0000255" key="1">
    <source>
        <dbReference type="HAMAP-Rule" id="MF_00563"/>
    </source>
</evidence>
<evidence type="ECO:0000256" key="2">
    <source>
        <dbReference type="SAM" id="MobiDB-lite"/>
    </source>
</evidence>
<evidence type="ECO:0000305" key="3"/>